<evidence type="ECO:0000255" key="1"/>
<organism>
    <name type="scientific">Saccharomyces cerevisiae (strain ATCC 204508 / S288c)</name>
    <name type="common">Baker's yeast</name>
    <dbReference type="NCBI Taxonomy" id="559292"/>
    <lineage>
        <taxon>Eukaryota</taxon>
        <taxon>Fungi</taxon>
        <taxon>Dikarya</taxon>
        <taxon>Ascomycota</taxon>
        <taxon>Saccharomycotina</taxon>
        <taxon>Saccharomycetes</taxon>
        <taxon>Saccharomycetales</taxon>
        <taxon>Saccharomycetaceae</taxon>
        <taxon>Saccharomyces</taxon>
    </lineage>
</organism>
<comment type="subcellular location">
    <subcellularLocation>
        <location>Membrane</location>
        <topology>Multi-pass membrane protein</topology>
    </subcellularLocation>
</comment>
<keyword id="KW-0472">Membrane</keyword>
<keyword id="KW-1185">Reference proteome</keyword>
<keyword id="KW-0812">Transmembrane</keyword>
<keyword id="KW-1133">Transmembrane helix</keyword>
<feature type="chain" id="PRO_0000202976" description="Uncharacterized membrane protein YIL089W">
    <location>
        <begin position="1"/>
        <end position="205"/>
    </location>
</feature>
<feature type="topological domain" description="Cytoplasmic" evidence="1">
    <location>
        <begin position="1"/>
        <end position="63"/>
    </location>
</feature>
<feature type="transmembrane region" description="Helical" evidence="1">
    <location>
        <begin position="64"/>
        <end position="84"/>
    </location>
</feature>
<feature type="topological domain" description="Extracellular" evidence="1">
    <location>
        <begin position="85"/>
        <end position="124"/>
    </location>
</feature>
<feature type="transmembrane region" description="Helical" evidence="1">
    <location>
        <begin position="125"/>
        <end position="145"/>
    </location>
</feature>
<feature type="topological domain" description="Cytoplasmic" evidence="1">
    <location>
        <begin position="146"/>
        <end position="205"/>
    </location>
</feature>
<gene>
    <name type="ordered locus">YIL089W</name>
</gene>
<reference key="1">
    <citation type="journal article" date="1997" name="Nature">
        <title>The nucleotide sequence of Saccharomyces cerevisiae chromosome IX.</title>
        <authorList>
            <person name="Churcher C.M."/>
            <person name="Bowman S."/>
            <person name="Badcock K."/>
            <person name="Bankier A.T."/>
            <person name="Brown D."/>
            <person name="Chillingworth T."/>
            <person name="Connor R."/>
            <person name="Devlin K."/>
            <person name="Gentles S."/>
            <person name="Hamlin N."/>
            <person name="Harris D.E."/>
            <person name="Horsnell T."/>
            <person name="Hunt S."/>
            <person name="Jagels K."/>
            <person name="Jones M."/>
            <person name="Lye G."/>
            <person name="Moule S."/>
            <person name="Odell C."/>
            <person name="Pearson D."/>
            <person name="Rajandream M.A."/>
            <person name="Rice P."/>
            <person name="Rowley N."/>
            <person name="Skelton J."/>
            <person name="Smith V."/>
            <person name="Walsh S.V."/>
            <person name="Whitehead S."/>
            <person name="Barrell B.G."/>
        </authorList>
    </citation>
    <scope>NUCLEOTIDE SEQUENCE [LARGE SCALE GENOMIC DNA]</scope>
    <source>
        <strain>ATCC 204508 / S288c</strain>
    </source>
</reference>
<reference key="2">
    <citation type="journal article" date="2014" name="G3 (Bethesda)">
        <title>The reference genome sequence of Saccharomyces cerevisiae: Then and now.</title>
        <authorList>
            <person name="Engel S.R."/>
            <person name="Dietrich F.S."/>
            <person name="Fisk D.G."/>
            <person name="Binkley G."/>
            <person name="Balakrishnan R."/>
            <person name="Costanzo M.C."/>
            <person name="Dwight S.S."/>
            <person name="Hitz B.C."/>
            <person name="Karra K."/>
            <person name="Nash R.S."/>
            <person name="Weng S."/>
            <person name="Wong E.D."/>
            <person name="Lloyd P."/>
            <person name="Skrzypek M.S."/>
            <person name="Miyasato S.R."/>
            <person name="Simison M."/>
            <person name="Cherry J.M."/>
        </authorList>
    </citation>
    <scope>GENOME REANNOTATION</scope>
    <source>
        <strain>ATCC 204508 / S288c</strain>
    </source>
</reference>
<reference key="3">
    <citation type="journal article" date="2006" name="Proc. Natl. Acad. Sci. U.S.A.">
        <title>A global topology map of the Saccharomyces cerevisiae membrane proteome.</title>
        <authorList>
            <person name="Kim H."/>
            <person name="Melen K."/>
            <person name="Oesterberg M."/>
            <person name="von Heijne G."/>
        </authorList>
    </citation>
    <scope>TOPOLOGY [LARGE SCALE ANALYSIS]</scope>
    <source>
        <strain>ATCC 208353 / W303-1A</strain>
    </source>
</reference>
<name>YII9_YEAST</name>
<sequence length="205" mass="23859">MQRTRELESSVAIDQTEVPRSRFFIMVKKLSRVADIVYIVDTFLIPPLHPLKKQHPKVAKFLKVQLVFDLISLFIFATHQLLLLEDGNFGKHYFKRKTKRCSKFSCSRCNANAHHPKWFKFKHSLLCLGTFCFGVYSLVKINKFFKTDQTVDLNRLLELFFWQLNAILNMKLFAFYGDHLESHSAPLDVYEDSFANKSSSGGDEV</sequence>
<protein>
    <recommendedName>
        <fullName>Uncharacterized membrane protein YIL089W</fullName>
    </recommendedName>
</protein>
<dbReference type="EMBL" id="Z46728">
    <property type="protein sequence ID" value="CAA86705.1"/>
    <property type="molecule type" value="Genomic_DNA"/>
</dbReference>
<dbReference type="EMBL" id="BK006942">
    <property type="protein sequence ID" value="DAA08464.1"/>
    <property type="molecule type" value="Genomic_DNA"/>
</dbReference>
<dbReference type="PIR" id="S49791">
    <property type="entry name" value="S49791"/>
</dbReference>
<dbReference type="RefSeq" id="NP_012177.1">
    <property type="nucleotide sequence ID" value="NM_001179437.1"/>
</dbReference>
<dbReference type="SMR" id="P40500"/>
<dbReference type="BioGRID" id="34903">
    <property type="interactions" value="47"/>
</dbReference>
<dbReference type="FunCoup" id="P40500">
    <property type="interactions" value="22"/>
</dbReference>
<dbReference type="IntAct" id="P40500">
    <property type="interactions" value="1"/>
</dbReference>
<dbReference type="STRING" id="4932.YIL089W"/>
<dbReference type="PaxDb" id="4932-YIL089W"/>
<dbReference type="EnsemblFungi" id="YIL089W_mRNA">
    <property type="protein sequence ID" value="YIL089W"/>
    <property type="gene ID" value="YIL089W"/>
</dbReference>
<dbReference type="GeneID" id="854719"/>
<dbReference type="KEGG" id="sce:YIL089W"/>
<dbReference type="AGR" id="SGD:S000001351"/>
<dbReference type="SGD" id="S000001351">
    <property type="gene designation" value="YIL089W"/>
</dbReference>
<dbReference type="VEuPathDB" id="FungiDB:YIL089W"/>
<dbReference type="GeneTree" id="ENSGT00940000180819"/>
<dbReference type="HOGENOM" id="CLU_113423_0_0_1"/>
<dbReference type="InParanoid" id="P40500"/>
<dbReference type="OMA" id="FIFATHQ"/>
<dbReference type="OrthoDB" id="4040973at2759"/>
<dbReference type="BioCyc" id="YEAST:G3O-31349-MONOMER"/>
<dbReference type="BioGRID-ORCS" id="854719">
    <property type="hits" value="1 hit in 10 CRISPR screens"/>
</dbReference>
<dbReference type="PRO" id="PR:P40500"/>
<dbReference type="Proteomes" id="UP000002311">
    <property type="component" value="Chromosome IX"/>
</dbReference>
<dbReference type="RNAct" id="P40500">
    <property type="molecule type" value="protein"/>
</dbReference>
<dbReference type="GO" id="GO:0005783">
    <property type="term" value="C:endoplasmic reticulum"/>
    <property type="evidence" value="ECO:0000314"/>
    <property type="project" value="SGD"/>
</dbReference>
<dbReference type="GO" id="GO:0000324">
    <property type="term" value="C:fungal-type vacuole"/>
    <property type="evidence" value="ECO:0007005"/>
    <property type="project" value="SGD"/>
</dbReference>
<dbReference type="GO" id="GO:0000328">
    <property type="term" value="C:fungal-type vacuole lumen"/>
    <property type="evidence" value="ECO:0000314"/>
    <property type="project" value="SGD"/>
</dbReference>
<dbReference type="GO" id="GO:0016020">
    <property type="term" value="C:membrane"/>
    <property type="evidence" value="ECO:0007669"/>
    <property type="project" value="UniProtKB-SubCell"/>
</dbReference>
<dbReference type="GO" id="GO:0005777">
    <property type="term" value="C:peroxisome"/>
    <property type="evidence" value="ECO:0007005"/>
    <property type="project" value="SGD"/>
</dbReference>
<dbReference type="InterPro" id="IPR031427">
    <property type="entry name" value="DUF4668"/>
</dbReference>
<dbReference type="Pfam" id="PF15701">
    <property type="entry name" value="DUF4668"/>
    <property type="match status" value="1"/>
</dbReference>
<accession>P40500</accession>
<accession>D6VVJ8</accession>
<proteinExistence type="evidence at protein level"/>